<sequence>MENTRRSFLKKVSAAGIGAAGLAMAGNAGATTTAAEPQKKKTAGKDDGKLRFGFIGTGSRCHEHINNVLAIPGNKIVAICDIQQGPIDSTLKHIAKFNVPAPKVYKGGEREFENMLNNEEFDCVIIASPWEWHVPMSVAAMKAGVPYVGVEVSAANTLEECWDLVNVSEATGSHLNIMENVCYRRDCMAALNMVRQGLFGEILHGGCGYEHDLREVKFNDGTHYNYVPGSGDLRMGPTAFAEAQWRTNHSVHRNGDIYPTHGIGPIAHCMDINRGNRFLSLSAMATQSRGLHKFIVDNGGENHPLAKVNFNLGDIVTSMIKCSNGQTIIVTHDTNSPRPYSLGFRVQGTEGLWMNDGDHVYVQGKSKPHRWDDSDEWFKKYDHKLWASLESQAAEAGHGGMDYIMMYDLIDAIRNKKPAPMDCYDAAAWSAISGLSEMSIARGGALVDFPDFTRGQWIHRQPQFAL</sequence>
<evidence type="ECO:0000250" key="1"/>
<evidence type="ECO:0000255" key="2">
    <source>
        <dbReference type="PROSITE-ProRule" id="PRU00648"/>
    </source>
</evidence>
<evidence type="ECO:0000305" key="3"/>
<reference key="1">
    <citation type="journal article" date="2007" name="PLoS Biol.">
        <title>Evolution of symbiotic bacteria in the distal human intestine.</title>
        <authorList>
            <person name="Xu J."/>
            <person name="Mahowald M.A."/>
            <person name="Ley R.E."/>
            <person name="Lozupone C.A."/>
            <person name="Hamady M."/>
            <person name="Martens E.C."/>
            <person name="Henrissat B."/>
            <person name="Coutinho P.M."/>
            <person name="Minx P."/>
            <person name="Latreille P."/>
            <person name="Cordum H."/>
            <person name="Van Brunt A."/>
            <person name="Kim K."/>
            <person name="Fulton R.S."/>
            <person name="Fulton L.A."/>
            <person name="Clifton S.W."/>
            <person name="Wilson R.K."/>
            <person name="Knight R.D."/>
            <person name="Gordon J.I."/>
        </authorList>
    </citation>
    <scope>NUCLEOTIDE SEQUENCE [LARGE SCALE GENOMIC DNA]</scope>
    <source>
        <strain>ATCC 8503 / DSM 20701 / CIP 104284 / JCM 5825 / NCTC 11152</strain>
    </source>
</reference>
<organism>
    <name type="scientific">Parabacteroides distasonis (strain ATCC 8503 / DSM 20701 / CIP 104284 / JCM 5825 / NCTC 11152)</name>
    <dbReference type="NCBI Taxonomy" id="435591"/>
    <lineage>
        <taxon>Bacteria</taxon>
        <taxon>Pseudomonadati</taxon>
        <taxon>Bacteroidota</taxon>
        <taxon>Bacteroidia</taxon>
        <taxon>Bacteroidales</taxon>
        <taxon>Tannerellaceae</taxon>
        <taxon>Parabacteroides</taxon>
    </lineage>
</organism>
<feature type="signal peptide" description="Tat-type signal" evidence="2">
    <location>
        <begin position="1"/>
        <end position="30"/>
    </location>
</feature>
<feature type="chain" id="PRO_0000348558" description="Glycosyl hydrolase family 109 protein">
    <location>
        <begin position="31"/>
        <end position="466"/>
    </location>
</feature>
<feature type="binding site" evidence="1">
    <location>
        <begin position="59"/>
        <end position="60"/>
    </location>
    <ligand>
        <name>NAD(+)</name>
        <dbReference type="ChEBI" id="CHEBI:57540"/>
    </ligand>
</feature>
<feature type="binding site" evidence="1">
    <location>
        <position position="81"/>
    </location>
    <ligand>
        <name>NAD(+)</name>
        <dbReference type="ChEBI" id="CHEBI:57540"/>
    </ligand>
</feature>
<feature type="binding site" evidence="1">
    <location>
        <begin position="130"/>
        <end position="133"/>
    </location>
    <ligand>
        <name>NAD(+)</name>
        <dbReference type="ChEBI" id="CHEBI:57540"/>
    </ligand>
</feature>
<feature type="binding site" evidence="1">
    <location>
        <begin position="151"/>
        <end position="152"/>
    </location>
    <ligand>
        <name>NAD(+)</name>
        <dbReference type="ChEBI" id="CHEBI:57540"/>
    </ligand>
</feature>
<feature type="binding site" evidence="1">
    <location>
        <position position="180"/>
    </location>
    <ligand>
        <name>NAD(+)</name>
        <dbReference type="ChEBI" id="CHEBI:57540"/>
    </ligand>
</feature>
<feature type="binding site" evidence="1">
    <location>
        <position position="209"/>
    </location>
    <ligand>
        <name>substrate</name>
    </ligand>
</feature>
<feature type="binding site" evidence="1">
    <location>
        <begin position="241"/>
        <end position="245"/>
    </location>
    <ligand>
        <name>NAD(+)</name>
        <dbReference type="ChEBI" id="CHEBI:57540"/>
    </ligand>
</feature>
<feature type="binding site" evidence="1">
    <location>
        <position position="246"/>
    </location>
    <ligand>
        <name>substrate</name>
    </ligand>
</feature>
<feature type="binding site" evidence="1">
    <location>
        <begin position="258"/>
        <end position="261"/>
    </location>
    <ligand>
        <name>substrate</name>
    </ligand>
</feature>
<feature type="binding site" evidence="1">
    <location>
        <position position="258"/>
    </location>
    <ligand>
        <name>NAD(+)</name>
        <dbReference type="ChEBI" id="CHEBI:57540"/>
    </ligand>
</feature>
<feature type="binding site" evidence="1">
    <location>
        <position position="340"/>
    </location>
    <ligand>
        <name>substrate</name>
    </ligand>
</feature>
<proteinExistence type="inferred from homology"/>
<comment type="function">
    <text evidence="1">Glycosidase.</text>
</comment>
<comment type="cofactor">
    <cofactor evidence="1">
        <name>NAD(+)</name>
        <dbReference type="ChEBI" id="CHEBI:57540"/>
    </cofactor>
    <text evidence="1">Binds 1 NAD(+) per subunit. The NAD(+) cannot dissociate.</text>
</comment>
<comment type="PTM">
    <text>Predicted to be exported by the Tat system. The position of the signal peptide cleavage has not been experimentally proven.</text>
</comment>
<comment type="similarity">
    <text evidence="3">Belongs to the Gfo/Idh/MocA family. Glycosyl hydrolase 109 subfamily.</text>
</comment>
<name>GH109_PARD8</name>
<gene>
    <name type="ordered locus">BDI_1155</name>
</gene>
<keyword id="KW-0326">Glycosidase</keyword>
<keyword id="KW-0378">Hydrolase</keyword>
<keyword id="KW-0520">NAD</keyword>
<keyword id="KW-1185">Reference proteome</keyword>
<keyword id="KW-0732">Signal</keyword>
<protein>
    <recommendedName>
        <fullName>Glycosyl hydrolase family 109 protein</fullName>
        <ecNumber>3.2.1.-</ecNumber>
    </recommendedName>
</protein>
<accession>A6LB54</accession>
<dbReference type="EC" id="3.2.1.-"/>
<dbReference type="EMBL" id="CP000140">
    <property type="protein sequence ID" value="ABR42918.1"/>
    <property type="molecule type" value="Genomic_DNA"/>
</dbReference>
<dbReference type="RefSeq" id="WP_005856826.1">
    <property type="nucleotide sequence ID" value="NZ_LR215978.1"/>
</dbReference>
<dbReference type="SMR" id="A6LB54"/>
<dbReference type="STRING" id="435591.BDI_1155"/>
<dbReference type="CAZy" id="GH109">
    <property type="family name" value="Glycoside Hydrolase Family 109"/>
</dbReference>
<dbReference type="PaxDb" id="435591-BDI_1155"/>
<dbReference type="KEGG" id="pdi:BDI_1155"/>
<dbReference type="eggNOG" id="COG0673">
    <property type="taxonomic scope" value="Bacteria"/>
</dbReference>
<dbReference type="HOGENOM" id="CLU_046965_0_0_10"/>
<dbReference type="BioCyc" id="PDIS435591:G1G5A-1190-MONOMER"/>
<dbReference type="Proteomes" id="UP000000566">
    <property type="component" value="Chromosome"/>
</dbReference>
<dbReference type="GO" id="GO:0016798">
    <property type="term" value="F:hydrolase activity, acting on glycosyl bonds"/>
    <property type="evidence" value="ECO:0007669"/>
    <property type="project" value="UniProtKB-KW"/>
</dbReference>
<dbReference type="GO" id="GO:0000166">
    <property type="term" value="F:nucleotide binding"/>
    <property type="evidence" value="ECO:0007669"/>
    <property type="project" value="InterPro"/>
</dbReference>
<dbReference type="Gene3D" id="3.30.360.10">
    <property type="entry name" value="Dihydrodipicolinate Reductase, domain 2"/>
    <property type="match status" value="1"/>
</dbReference>
<dbReference type="Gene3D" id="3.40.50.720">
    <property type="entry name" value="NAD(P)-binding Rossmann-like Domain"/>
    <property type="match status" value="1"/>
</dbReference>
<dbReference type="InterPro" id="IPR000683">
    <property type="entry name" value="Gfo/Idh/MocA-like_OxRdtase_N"/>
</dbReference>
<dbReference type="InterPro" id="IPR050463">
    <property type="entry name" value="Gfo/Idh/MocA_oxidrdct_glycsds"/>
</dbReference>
<dbReference type="InterPro" id="IPR049303">
    <property type="entry name" value="Glyco_hydro_109_C"/>
</dbReference>
<dbReference type="InterPro" id="IPR036291">
    <property type="entry name" value="NAD(P)-bd_dom_sf"/>
</dbReference>
<dbReference type="InterPro" id="IPR006311">
    <property type="entry name" value="TAT_signal"/>
</dbReference>
<dbReference type="InterPro" id="IPR019546">
    <property type="entry name" value="TAT_signal_bac_arc"/>
</dbReference>
<dbReference type="NCBIfam" id="TIGR01409">
    <property type="entry name" value="TAT_signal_seq"/>
    <property type="match status" value="1"/>
</dbReference>
<dbReference type="PANTHER" id="PTHR43818">
    <property type="entry name" value="BCDNA.GH03377"/>
    <property type="match status" value="1"/>
</dbReference>
<dbReference type="PANTHER" id="PTHR43818:SF1">
    <property type="entry name" value="GLYCOSYL HYDROLASE FAMILY 109 PROTEIN"/>
    <property type="match status" value="1"/>
</dbReference>
<dbReference type="Pfam" id="PF01408">
    <property type="entry name" value="GFO_IDH_MocA"/>
    <property type="match status" value="1"/>
</dbReference>
<dbReference type="Pfam" id="PF21252">
    <property type="entry name" value="Glyco_hydro_109_C"/>
    <property type="match status" value="1"/>
</dbReference>
<dbReference type="SUPFAM" id="SSF55347">
    <property type="entry name" value="Glyceraldehyde-3-phosphate dehydrogenase-like, C-terminal domain"/>
    <property type="match status" value="1"/>
</dbReference>
<dbReference type="SUPFAM" id="SSF51735">
    <property type="entry name" value="NAD(P)-binding Rossmann-fold domains"/>
    <property type="match status" value="1"/>
</dbReference>
<dbReference type="PROSITE" id="PS51318">
    <property type="entry name" value="TAT"/>
    <property type="match status" value="1"/>
</dbReference>